<organism>
    <name type="scientific">Clostridium botulinum (strain Langeland / NCTC 10281 / Type F)</name>
    <dbReference type="NCBI Taxonomy" id="441772"/>
    <lineage>
        <taxon>Bacteria</taxon>
        <taxon>Bacillati</taxon>
        <taxon>Bacillota</taxon>
        <taxon>Clostridia</taxon>
        <taxon>Eubacteriales</taxon>
        <taxon>Clostridiaceae</taxon>
        <taxon>Clostridium</taxon>
    </lineage>
</organism>
<proteinExistence type="inferred from homology"/>
<protein>
    <recommendedName>
        <fullName evidence="1">Aspartyl/glutamyl-tRNA(Asn/Gln) amidotransferase subunit B</fullName>
        <shortName evidence="1">Asp/Glu-ADT subunit B</shortName>
        <ecNumber evidence="1">6.3.5.-</ecNumber>
    </recommendedName>
</protein>
<reference key="1">
    <citation type="submission" date="2007-06" db="EMBL/GenBank/DDBJ databases">
        <authorList>
            <person name="Brinkac L.M."/>
            <person name="Daugherty S."/>
            <person name="Dodson R.J."/>
            <person name="Madupu R."/>
            <person name="Brown J.L."/>
            <person name="Bruce D."/>
            <person name="Detter C."/>
            <person name="Munk C."/>
            <person name="Smith L.A."/>
            <person name="Smith T.J."/>
            <person name="White O."/>
            <person name="Brettin T.S."/>
        </authorList>
    </citation>
    <scope>NUCLEOTIDE SEQUENCE [LARGE SCALE GENOMIC DNA]</scope>
    <source>
        <strain>Langeland / NCTC 10281 / Type F</strain>
    </source>
</reference>
<comment type="function">
    <text evidence="1">Allows the formation of correctly charged Asn-tRNA(Asn) or Gln-tRNA(Gln) through the transamidation of misacylated Asp-tRNA(Asn) or Glu-tRNA(Gln) in organisms which lack either or both of asparaginyl-tRNA or glutaminyl-tRNA synthetases. The reaction takes place in the presence of glutamine and ATP through an activated phospho-Asp-tRNA(Asn) or phospho-Glu-tRNA(Gln).</text>
</comment>
<comment type="catalytic activity">
    <reaction evidence="1">
        <text>L-glutamyl-tRNA(Gln) + L-glutamine + ATP + H2O = L-glutaminyl-tRNA(Gln) + L-glutamate + ADP + phosphate + H(+)</text>
        <dbReference type="Rhea" id="RHEA:17521"/>
        <dbReference type="Rhea" id="RHEA-COMP:9681"/>
        <dbReference type="Rhea" id="RHEA-COMP:9684"/>
        <dbReference type="ChEBI" id="CHEBI:15377"/>
        <dbReference type="ChEBI" id="CHEBI:15378"/>
        <dbReference type="ChEBI" id="CHEBI:29985"/>
        <dbReference type="ChEBI" id="CHEBI:30616"/>
        <dbReference type="ChEBI" id="CHEBI:43474"/>
        <dbReference type="ChEBI" id="CHEBI:58359"/>
        <dbReference type="ChEBI" id="CHEBI:78520"/>
        <dbReference type="ChEBI" id="CHEBI:78521"/>
        <dbReference type="ChEBI" id="CHEBI:456216"/>
    </reaction>
</comment>
<comment type="catalytic activity">
    <reaction evidence="1">
        <text>L-aspartyl-tRNA(Asn) + L-glutamine + ATP + H2O = L-asparaginyl-tRNA(Asn) + L-glutamate + ADP + phosphate + 2 H(+)</text>
        <dbReference type="Rhea" id="RHEA:14513"/>
        <dbReference type="Rhea" id="RHEA-COMP:9674"/>
        <dbReference type="Rhea" id="RHEA-COMP:9677"/>
        <dbReference type="ChEBI" id="CHEBI:15377"/>
        <dbReference type="ChEBI" id="CHEBI:15378"/>
        <dbReference type="ChEBI" id="CHEBI:29985"/>
        <dbReference type="ChEBI" id="CHEBI:30616"/>
        <dbReference type="ChEBI" id="CHEBI:43474"/>
        <dbReference type="ChEBI" id="CHEBI:58359"/>
        <dbReference type="ChEBI" id="CHEBI:78515"/>
        <dbReference type="ChEBI" id="CHEBI:78516"/>
        <dbReference type="ChEBI" id="CHEBI:456216"/>
    </reaction>
</comment>
<comment type="subunit">
    <text evidence="1">Heterotrimer of A, B and C subunits.</text>
</comment>
<comment type="similarity">
    <text evidence="1">Belongs to the GatB/GatE family. GatB subfamily.</text>
</comment>
<feature type="chain" id="PRO_1000015960" description="Aspartyl/glutamyl-tRNA(Asn/Gln) amidotransferase subunit B">
    <location>
        <begin position="1"/>
        <end position="476"/>
    </location>
</feature>
<accession>A7GIK1</accession>
<evidence type="ECO:0000255" key="1">
    <source>
        <dbReference type="HAMAP-Rule" id="MF_00121"/>
    </source>
</evidence>
<dbReference type="EC" id="6.3.5.-" evidence="1"/>
<dbReference type="EMBL" id="CP000728">
    <property type="protein sequence ID" value="ABS42089.1"/>
    <property type="molecule type" value="Genomic_DNA"/>
</dbReference>
<dbReference type="RefSeq" id="WP_012100997.1">
    <property type="nucleotide sequence ID" value="NC_009699.1"/>
</dbReference>
<dbReference type="SMR" id="A7GIK1"/>
<dbReference type="KEGG" id="cbf:CLI_3436"/>
<dbReference type="HOGENOM" id="CLU_019240_0_0_9"/>
<dbReference type="Proteomes" id="UP000002410">
    <property type="component" value="Chromosome"/>
</dbReference>
<dbReference type="GO" id="GO:0050566">
    <property type="term" value="F:asparaginyl-tRNA synthase (glutamine-hydrolyzing) activity"/>
    <property type="evidence" value="ECO:0007669"/>
    <property type="project" value="RHEA"/>
</dbReference>
<dbReference type="GO" id="GO:0005524">
    <property type="term" value="F:ATP binding"/>
    <property type="evidence" value="ECO:0007669"/>
    <property type="project" value="UniProtKB-KW"/>
</dbReference>
<dbReference type="GO" id="GO:0050567">
    <property type="term" value="F:glutaminyl-tRNA synthase (glutamine-hydrolyzing) activity"/>
    <property type="evidence" value="ECO:0007669"/>
    <property type="project" value="UniProtKB-UniRule"/>
</dbReference>
<dbReference type="GO" id="GO:0070681">
    <property type="term" value="P:glutaminyl-tRNAGln biosynthesis via transamidation"/>
    <property type="evidence" value="ECO:0007669"/>
    <property type="project" value="TreeGrafter"/>
</dbReference>
<dbReference type="GO" id="GO:0006412">
    <property type="term" value="P:translation"/>
    <property type="evidence" value="ECO:0007669"/>
    <property type="project" value="UniProtKB-UniRule"/>
</dbReference>
<dbReference type="FunFam" id="1.10.10.410:FF:000001">
    <property type="entry name" value="Aspartyl/glutamyl-tRNA(Asn/Gln) amidotransferase subunit B"/>
    <property type="match status" value="1"/>
</dbReference>
<dbReference type="FunFam" id="1.10.150.380:FF:000001">
    <property type="entry name" value="Aspartyl/glutamyl-tRNA(Asn/Gln) amidotransferase subunit B"/>
    <property type="match status" value="1"/>
</dbReference>
<dbReference type="Gene3D" id="1.10.10.410">
    <property type="match status" value="1"/>
</dbReference>
<dbReference type="Gene3D" id="1.10.150.380">
    <property type="entry name" value="GatB domain, N-terminal subdomain"/>
    <property type="match status" value="1"/>
</dbReference>
<dbReference type="HAMAP" id="MF_00121">
    <property type="entry name" value="GatB"/>
    <property type="match status" value="1"/>
</dbReference>
<dbReference type="InterPro" id="IPR017959">
    <property type="entry name" value="Asn/Gln-tRNA_amidoTrfase_suB/E"/>
</dbReference>
<dbReference type="InterPro" id="IPR006075">
    <property type="entry name" value="Asn/Gln-tRNA_Trfase_suB/E_cat"/>
</dbReference>
<dbReference type="InterPro" id="IPR018027">
    <property type="entry name" value="Asn/Gln_amidotransferase"/>
</dbReference>
<dbReference type="InterPro" id="IPR003789">
    <property type="entry name" value="Asn/Gln_tRNA_amidoTrase-B-like"/>
</dbReference>
<dbReference type="InterPro" id="IPR004413">
    <property type="entry name" value="GatB"/>
</dbReference>
<dbReference type="InterPro" id="IPR042114">
    <property type="entry name" value="GatB_C_1"/>
</dbReference>
<dbReference type="InterPro" id="IPR023168">
    <property type="entry name" value="GatB_Yqey_C_2"/>
</dbReference>
<dbReference type="InterPro" id="IPR017958">
    <property type="entry name" value="Gln-tRNA_amidoTrfase_suB_CS"/>
</dbReference>
<dbReference type="InterPro" id="IPR014746">
    <property type="entry name" value="Gln_synth/guanido_kin_cat_dom"/>
</dbReference>
<dbReference type="NCBIfam" id="TIGR00133">
    <property type="entry name" value="gatB"/>
    <property type="match status" value="1"/>
</dbReference>
<dbReference type="NCBIfam" id="NF004012">
    <property type="entry name" value="PRK05477.1-2"/>
    <property type="match status" value="1"/>
</dbReference>
<dbReference type="NCBIfam" id="NF004014">
    <property type="entry name" value="PRK05477.1-4"/>
    <property type="match status" value="1"/>
</dbReference>
<dbReference type="PANTHER" id="PTHR11659">
    <property type="entry name" value="GLUTAMYL-TRNA GLN AMIDOTRANSFERASE SUBUNIT B MITOCHONDRIAL AND PROKARYOTIC PET112-RELATED"/>
    <property type="match status" value="1"/>
</dbReference>
<dbReference type="PANTHER" id="PTHR11659:SF0">
    <property type="entry name" value="GLUTAMYL-TRNA(GLN) AMIDOTRANSFERASE SUBUNIT B, MITOCHONDRIAL"/>
    <property type="match status" value="1"/>
</dbReference>
<dbReference type="Pfam" id="PF02934">
    <property type="entry name" value="GatB_N"/>
    <property type="match status" value="1"/>
</dbReference>
<dbReference type="Pfam" id="PF02637">
    <property type="entry name" value="GatB_Yqey"/>
    <property type="match status" value="1"/>
</dbReference>
<dbReference type="SMART" id="SM00845">
    <property type="entry name" value="GatB_Yqey"/>
    <property type="match status" value="1"/>
</dbReference>
<dbReference type="SUPFAM" id="SSF89095">
    <property type="entry name" value="GatB/YqeY motif"/>
    <property type="match status" value="1"/>
</dbReference>
<dbReference type="SUPFAM" id="SSF55931">
    <property type="entry name" value="Glutamine synthetase/guanido kinase"/>
    <property type="match status" value="1"/>
</dbReference>
<dbReference type="PROSITE" id="PS01234">
    <property type="entry name" value="GATB"/>
    <property type="match status" value="1"/>
</dbReference>
<sequence length="476" mass="53804">MDFEAVIGLEVHAELSTNTKIYCGCTTEFGGQPNTHVCPICLGLPGSLPQLNKRVVEYGIKAGLALNCSINKVCRMDRKNYFYPDCPKNYQITQDEVPICRDGYIEIELENGEKKKIGIERIHMEEDAGKLLHTNAGTLVDYNRAGVPLIEIVSRPDIRTPEEATKYLEKLKSILSSIEVSDCKMEQGSLRCDGNISVMPKGSEKFGVRSEIKNMNSFKALEKALSYEYDRHVEAVTKGEILEQETRRWDEANSVTVLMRSKEKANDYRYFPEGDLVTLNISDEWIEEVRKTIPELPHEKAERFVNEFRIPKYDAMVLTLTMDMAKFFEETALKSEDAKATSNWLMGDISRLMNEKTIEVKDLKFNPEQLAELIKLINAGTISNNIGKKVLDDMFKSGKSPKDIVEEKGLVQNNDEGAILEVVKKIIENNPQSIEDFKNGKKRALGFLVGLVMKETKGKANPQIVNKLVSEEANKM</sequence>
<name>GATB_CLOBL</name>
<gene>
    <name evidence="1" type="primary">gatB</name>
    <name type="ordered locus">CLI_3436</name>
</gene>
<keyword id="KW-0067">ATP-binding</keyword>
<keyword id="KW-0436">Ligase</keyword>
<keyword id="KW-0547">Nucleotide-binding</keyword>
<keyword id="KW-0648">Protein biosynthesis</keyword>